<sequence>MSGIVEQTAVPSRVATVSLHTSPLDQPGTGDAGGMNVYVVEVARRMAERGVAVDVFTRATRADLPPVVELAPGVNVRHVPAGPYGRLDKNTLAEHLCPFIFGMLRAEAQNEPDHYDLVHGHYWLSGQAGVVAARRWGVPLVQSMHTMARVKNASLADGDEPEPEARLRGEDQLVRQADRLIANTDDEARQLREHYGARDGQISVIPPGVDLEVFSPGSRRDALARIGLPAGTELLLFVGRVQRLKAPDVLIRAAAALLERDPSLRSRLVVGVVGGLSGGGMREPGLLTDLARSLGVADVVRIEPPQTRERLADYYRAAAVTVVPSYSESFGLVAVESQACGTPVLAARVGGLTTAVADGVSGVLVRGHNPDDYAAELHRMIAEPAWRAKLAMAAPEHAATLGWSRTVDELLDVYRACTAPRALPLAACR</sequence>
<dbReference type="EC" id="2.4.1.250" evidence="1"/>
<dbReference type="EMBL" id="CP002040">
    <property type="protein sequence ID" value="ADH69725.1"/>
    <property type="molecule type" value="Genomic_DNA"/>
</dbReference>
<dbReference type="SMR" id="D7AW65"/>
<dbReference type="STRING" id="446468.Ndas_4336"/>
<dbReference type="CAZy" id="GT4">
    <property type="family name" value="Glycosyltransferase Family 4"/>
</dbReference>
<dbReference type="KEGG" id="nda:Ndas_4336"/>
<dbReference type="eggNOG" id="COG0438">
    <property type="taxonomic scope" value="Bacteria"/>
</dbReference>
<dbReference type="HOGENOM" id="CLU_009583_2_3_11"/>
<dbReference type="OrthoDB" id="9810929at2"/>
<dbReference type="Proteomes" id="UP000002219">
    <property type="component" value="Chromosome 1"/>
</dbReference>
<dbReference type="GO" id="GO:0008375">
    <property type="term" value="F:acetylglucosaminyltransferase activity"/>
    <property type="evidence" value="ECO:0007669"/>
    <property type="project" value="UniProtKB-UniRule"/>
</dbReference>
<dbReference type="GO" id="GO:0102710">
    <property type="term" value="F:D-inositol-3-phosphate glycosyltransferase activity"/>
    <property type="evidence" value="ECO:0007669"/>
    <property type="project" value="UniProtKB-EC"/>
</dbReference>
<dbReference type="GO" id="GO:0000287">
    <property type="term" value="F:magnesium ion binding"/>
    <property type="evidence" value="ECO:0007669"/>
    <property type="project" value="UniProtKB-UniRule"/>
</dbReference>
<dbReference type="GO" id="GO:0010125">
    <property type="term" value="P:mycothiol biosynthetic process"/>
    <property type="evidence" value="ECO:0007669"/>
    <property type="project" value="UniProtKB-UniRule"/>
</dbReference>
<dbReference type="Gene3D" id="3.40.50.2000">
    <property type="entry name" value="Glycogen Phosphorylase B"/>
    <property type="match status" value="2"/>
</dbReference>
<dbReference type="HAMAP" id="MF_01695">
    <property type="entry name" value="MshA"/>
    <property type="match status" value="1"/>
</dbReference>
<dbReference type="InterPro" id="IPR001296">
    <property type="entry name" value="Glyco_trans_1"/>
</dbReference>
<dbReference type="InterPro" id="IPR028098">
    <property type="entry name" value="Glyco_trans_4-like_N"/>
</dbReference>
<dbReference type="InterPro" id="IPR050194">
    <property type="entry name" value="Glycosyltransferase_grp1"/>
</dbReference>
<dbReference type="InterPro" id="IPR017814">
    <property type="entry name" value="Mycothiol_biosynthesis_MshA"/>
</dbReference>
<dbReference type="NCBIfam" id="TIGR03449">
    <property type="entry name" value="mycothiol_MshA"/>
    <property type="match status" value="1"/>
</dbReference>
<dbReference type="PANTHER" id="PTHR45947">
    <property type="entry name" value="SULFOQUINOVOSYL TRANSFERASE SQD2"/>
    <property type="match status" value="1"/>
</dbReference>
<dbReference type="PANTHER" id="PTHR45947:SF3">
    <property type="entry name" value="SULFOQUINOVOSYL TRANSFERASE SQD2"/>
    <property type="match status" value="1"/>
</dbReference>
<dbReference type="Pfam" id="PF13579">
    <property type="entry name" value="Glyco_trans_4_4"/>
    <property type="match status" value="1"/>
</dbReference>
<dbReference type="Pfam" id="PF00534">
    <property type="entry name" value="Glycos_transf_1"/>
    <property type="match status" value="1"/>
</dbReference>
<dbReference type="SUPFAM" id="SSF53756">
    <property type="entry name" value="UDP-Glycosyltransferase/glycogen phosphorylase"/>
    <property type="match status" value="1"/>
</dbReference>
<evidence type="ECO:0000255" key="1">
    <source>
        <dbReference type="HAMAP-Rule" id="MF_01695"/>
    </source>
</evidence>
<accession>D7AW65</accession>
<keyword id="KW-0328">Glycosyltransferase</keyword>
<keyword id="KW-0460">Magnesium</keyword>
<keyword id="KW-0479">Metal-binding</keyword>
<keyword id="KW-1185">Reference proteome</keyword>
<keyword id="KW-0808">Transferase</keyword>
<reference key="1">
    <citation type="journal article" date="2010" name="Stand. Genomic Sci.">
        <title>Complete genome sequence of Nocardiopsis dassonvillei type strain (IMRU 509).</title>
        <authorList>
            <consortium name="US DOE Joint Genome Institute (JGI-PGF)"/>
            <person name="Sun H."/>
            <person name="Lapidus A."/>
            <person name="Nolan M."/>
            <person name="Lucas S."/>
            <person name="Del Rio T.G."/>
            <person name="Tice H."/>
            <person name="Cheng J.F."/>
            <person name="Tapia R."/>
            <person name="Han C."/>
            <person name="Goodwin L."/>
            <person name="Pitluck S."/>
            <person name="Pagani I."/>
            <person name="Ivanova N."/>
            <person name="Mavromatis K."/>
            <person name="Mikhailova N."/>
            <person name="Pati A."/>
            <person name="Chen A."/>
            <person name="Palaniappan K."/>
            <person name="Land M."/>
            <person name="Hauser L."/>
            <person name="Chang Y.J."/>
            <person name="Jeffries C.D."/>
            <person name="Djao O.D."/>
            <person name="Rohde M."/>
            <person name="Sikorski J."/>
            <person name="Goker M."/>
            <person name="Woyke T."/>
            <person name="Bristow J."/>
            <person name="Eisen J.A."/>
            <person name="Markowitz V."/>
            <person name="Hugenholtz P."/>
            <person name="Kyrpides N.C."/>
            <person name="Klenk H.P."/>
        </authorList>
    </citation>
    <scope>NUCLEOTIDE SEQUENCE [LARGE SCALE GENOMIC DNA]</scope>
    <source>
        <strain>ATCC 23218 / DSM 43111 / CIP 107115 / JCM 7437 / KCTC 9190 / NBRC 14626 / NCTC 10488 / NRRL B-5397 / IMRU 509</strain>
    </source>
</reference>
<organism>
    <name type="scientific">Nocardiopsis dassonvillei (strain ATCC 23218 / DSM 43111 / CIP 107115 / JCM 7437 / KCTC 9190 / NBRC 14626 / NCTC 10488 / NRRL B-5397 / IMRU 509)</name>
    <name type="common">Actinomadura dassonvillei</name>
    <dbReference type="NCBI Taxonomy" id="446468"/>
    <lineage>
        <taxon>Bacteria</taxon>
        <taxon>Bacillati</taxon>
        <taxon>Actinomycetota</taxon>
        <taxon>Actinomycetes</taxon>
        <taxon>Streptosporangiales</taxon>
        <taxon>Nocardiopsidaceae</taxon>
        <taxon>Nocardiopsis</taxon>
    </lineage>
</organism>
<protein>
    <recommendedName>
        <fullName>D-inositol 3-phosphate glycosyltransferase</fullName>
        <ecNumber evidence="1">2.4.1.250</ecNumber>
    </recommendedName>
    <alternativeName>
        <fullName evidence="1">N-acetylglucosamine-inositol-phosphate N-acetylglucosaminyltransferase</fullName>
        <shortName evidence="1">GlcNAc-Ins-P N-acetylglucosaminyltransferase</shortName>
    </alternativeName>
</protein>
<name>MSHA_NOCDD</name>
<proteinExistence type="inferred from homology"/>
<feature type="chain" id="PRO_0000400147" description="D-inositol 3-phosphate glycosyltransferase">
    <location>
        <begin position="1"/>
        <end position="429"/>
    </location>
</feature>
<feature type="binding site" evidence="1">
    <location>
        <position position="20"/>
    </location>
    <ligand>
        <name>1D-myo-inositol 3-phosphate</name>
        <dbReference type="ChEBI" id="CHEBI:58401"/>
    </ligand>
</feature>
<feature type="binding site" evidence="1">
    <location>
        <begin position="26"/>
        <end position="27"/>
    </location>
    <ligand>
        <name>UDP-N-acetyl-alpha-D-glucosamine</name>
        <dbReference type="ChEBI" id="CHEBI:57705"/>
    </ligand>
</feature>
<feature type="binding site" evidence="1">
    <location>
        <begin position="31"/>
        <end position="36"/>
    </location>
    <ligand>
        <name>1D-myo-inositol 3-phosphate</name>
        <dbReference type="ChEBI" id="CHEBI:58401"/>
    </ligand>
</feature>
<feature type="binding site" evidence="1">
    <location>
        <position position="34"/>
    </location>
    <ligand>
        <name>UDP-N-acetyl-alpha-D-glucosamine</name>
        <dbReference type="ChEBI" id="CHEBI:57705"/>
    </ligand>
</feature>
<feature type="binding site" evidence="1">
    <location>
        <position position="89"/>
    </location>
    <ligand>
        <name>1D-myo-inositol 3-phosphate</name>
        <dbReference type="ChEBI" id="CHEBI:58401"/>
    </ligand>
</feature>
<feature type="binding site" evidence="1">
    <location>
        <position position="122"/>
    </location>
    <ligand>
        <name>1D-myo-inositol 3-phosphate</name>
        <dbReference type="ChEBI" id="CHEBI:58401"/>
    </ligand>
</feature>
<feature type="binding site" evidence="1">
    <location>
        <position position="146"/>
    </location>
    <ligand>
        <name>1D-myo-inositol 3-phosphate</name>
        <dbReference type="ChEBI" id="CHEBI:58401"/>
    </ligand>
</feature>
<feature type="binding site" evidence="1">
    <location>
        <position position="166"/>
    </location>
    <ligand>
        <name>1D-myo-inositol 3-phosphate</name>
        <dbReference type="ChEBI" id="CHEBI:58401"/>
    </ligand>
</feature>
<feature type="binding site" evidence="1">
    <location>
        <position position="240"/>
    </location>
    <ligand>
        <name>UDP-N-acetyl-alpha-D-glucosamine</name>
        <dbReference type="ChEBI" id="CHEBI:57705"/>
    </ligand>
</feature>
<feature type="binding site" evidence="1">
    <location>
        <position position="245"/>
    </location>
    <ligand>
        <name>UDP-N-acetyl-alpha-D-glucosamine</name>
        <dbReference type="ChEBI" id="CHEBI:57705"/>
    </ligand>
</feature>
<feature type="binding site" evidence="1">
    <location>
        <position position="306"/>
    </location>
    <ligand>
        <name>UDP-N-acetyl-alpha-D-glucosamine</name>
        <dbReference type="ChEBI" id="CHEBI:57705"/>
    </ligand>
</feature>
<feature type="binding site" evidence="1">
    <location>
        <position position="315"/>
    </location>
    <ligand>
        <name>Mg(2+)</name>
        <dbReference type="ChEBI" id="CHEBI:18420"/>
    </ligand>
</feature>
<feature type="binding site" evidence="1">
    <location>
        <position position="316"/>
    </location>
    <ligand>
        <name>Mg(2+)</name>
        <dbReference type="ChEBI" id="CHEBI:18420"/>
    </ligand>
</feature>
<feature type="binding site" evidence="1">
    <location>
        <position position="318"/>
    </location>
    <ligand>
        <name>Mg(2+)</name>
        <dbReference type="ChEBI" id="CHEBI:18420"/>
    </ligand>
</feature>
<feature type="binding site" evidence="1">
    <location>
        <position position="328"/>
    </location>
    <ligand>
        <name>UDP-N-acetyl-alpha-D-glucosamine</name>
        <dbReference type="ChEBI" id="CHEBI:57705"/>
    </ligand>
</feature>
<feature type="binding site" evidence="1">
    <location>
        <position position="336"/>
    </location>
    <ligand>
        <name>UDP-N-acetyl-alpha-D-glucosamine</name>
        <dbReference type="ChEBI" id="CHEBI:57705"/>
    </ligand>
</feature>
<feature type="binding site" evidence="1">
    <location>
        <position position="342"/>
    </location>
    <ligand>
        <name>Mg(2+)</name>
        <dbReference type="ChEBI" id="CHEBI:18420"/>
    </ligand>
</feature>
<comment type="function">
    <text evidence="1">Catalyzes the transfer of a N-acetyl-glucosamine moiety to 1D-myo-inositol 3-phosphate to produce 1D-myo-inositol 2-acetamido-2-deoxy-glucopyranoside 3-phosphate in the mycothiol biosynthesis pathway.</text>
</comment>
<comment type="catalytic activity">
    <reaction evidence="1">
        <text>1D-myo-inositol 3-phosphate + UDP-N-acetyl-alpha-D-glucosamine = 1D-myo-inositol 2-acetamido-2-deoxy-alpha-D-glucopyranoside 3-phosphate + UDP + H(+)</text>
        <dbReference type="Rhea" id="RHEA:26188"/>
        <dbReference type="ChEBI" id="CHEBI:15378"/>
        <dbReference type="ChEBI" id="CHEBI:57705"/>
        <dbReference type="ChEBI" id="CHEBI:58223"/>
        <dbReference type="ChEBI" id="CHEBI:58401"/>
        <dbReference type="ChEBI" id="CHEBI:58892"/>
        <dbReference type="EC" id="2.4.1.250"/>
    </reaction>
</comment>
<comment type="subunit">
    <text evidence="1">Homodimer.</text>
</comment>
<comment type="similarity">
    <text evidence="1">Belongs to the glycosyltransferase group 1 family. MshA subfamily.</text>
</comment>
<gene>
    <name evidence="1" type="primary">mshA</name>
    <name type="ordered locus">Ndas_4336</name>
</gene>